<reference key="1">
    <citation type="journal article" date="2008" name="Mol. Biol. Evol.">
        <title>Genome evolution of Wolbachia strain wPip from the Culex pipiens group.</title>
        <authorList>
            <person name="Klasson L."/>
            <person name="Walker T."/>
            <person name="Sebaihia M."/>
            <person name="Sanders M.J."/>
            <person name="Quail M.A."/>
            <person name="Lord A."/>
            <person name="Sanders S."/>
            <person name="Earl J."/>
            <person name="O'Neill S.L."/>
            <person name="Thomson N."/>
            <person name="Sinkins S.P."/>
            <person name="Parkhill J."/>
        </authorList>
    </citation>
    <scope>NUCLEOTIDE SEQUENCE [LARGE SCALE GENOMIC DNA]</scope>
    <source>
        <strain>wPip</strain>
    </source>
</reference>
<proteinExistence type="inferred from homology"/>
<dbReference type="EMBL" id="AM999887">
    <property type="protein sequence ID" value="CAQ54631.1"/>
    <property type="molecule type" value="Genomic_DNA"/>
</dbReference>
<dbReference type="RefSeq" id="WP_007301960.1">
    <property type="nucleotide sequence ID" value="NC_010981.1"/>
</dbReference>
<dbReference type="SMR" id="B3CPX8"/>
<dbReference type="KEGG" id="wpi:WP0523"/>
<dbReference type="eggNOG" id="COG0576">
    <property type="taxonomic scope" value="Bacteria"/>
</dbReference>
<dbReference type="HOGENOM" id="CLU_057217_6_2_5"/>
<dbReference type="Proteomes" id="UP000008814">
    <property type="component" value="Chromosome"/>
</dbReference>
<dbReference type="GO" id="GO:0005737">
    <property type="term" value="C:cytoplasm"/>
    <property type="evidence" value="ECO:0007669"/>
    <property type="project" value="UniProtKB-SubCell"/>
</dbReference>
<dbReference type="GO" id="GO:0000774">
    <property type="term" value="F:adenyl-nucleotide exchange factor activity"/>
    <property type="evidence" value="ECO:0007669"/>
    <property type="project" value="InterPro"/>
</dbReference>
<dbReference type="GO" id="GO:0042803">
    <property type="term" value="F:protein homodimerization activity"/>
    <property type="evidence" value="ECO:0007669"/>
    <property type="project" value="InterPro"/>
</dbReference>
<dbReference type="GO" id="GO:0051087">
    <property type="term" value="F:protein-folding chaperone binding"/>
    <property type="evidence" value="ECO:0007669"/>
    <property type="project" value="InterPro"/>
</dbReference>
<dbReference type="GO" id="GO:0051082">
    <property type="term" value="F:unfolded protein binding"/>
    <property type="evidence" value="ECO:0007669"/>
    <property type="project" value="TreeGrafter"/>
</dbReference>
<dbReference type="GO" id="GO:0006457">
    <property type="term" value="P:protein folding"/>
    <property type="evidence" value="ECO:0007669"/>
    <property type="project" value="InterPro"/>
</dbReference>
<dbReference type="CDD" id="cd00446">
    <property type="entry name" value="GrpE"/>
    <property type="match status" value="1"/>
</dbReference>
<dbReference type="FunFam" id="2.30.22.10:FF:000001">
    <property type="entry name" value="Protein GrpE"/>
    <property type="match status" value="1"/>
</dbReference>
<dbReference type="Gene3D" id="3.90.20.20">
    <property type="match status" value="1"/>
</dbReference>
<dbReference type="Gene3D" id="2.30.22.10">
    <property type="entry name" value="Head domain of nucleotide exchange factor GrpE"/>
    <property type="match status" value="1"/>
</dbReference>
<dbReference type="HAMAP" id="MF_01151">
    <property type="entry name" value="GrpE"/>
    <property type="match status" value="1"/>
</dbReference>
<dbReference type="InterPro" id="IPR000740">
    <property type="entry name" value="GrpE"/>
</dbReference>
<dbReference type="InterPro" id="IPR013805">
    <property type="entry name" value="GrpE_coiled_coil"/>
</dbReference>
<dbReference type="InterPro" id="IPR009012">
    <property type="entry name" value="GrpE_head"/>
</dbReference>
<dbReference type="PANTHER" id="PTHR21237">
    <property type="entry name" value="GRPE PROTEIN"/>
    <property type="match status" value="1"/>
</dbReference>
<dbReference type="PANTHER" id="PTHR21237:SF23">
    <property type="entry name" value="GRPE PROTEIN HOMOLOG, MITOCHONDRIAL"/>
    <property type="match status" value="1"/>
</dbReference>
<dbReference type="Pfam" id="PF01025">
    <property type="entry name" value="GrpE"/>
    <property type="match status" value="1"/>
</dbReference>
<dbReference type="PRINTS" id="PR00773">
    <property type="entry name" value="GRPEPROTEIN"/>
</dbReference>
<dbReference type="SUPFAM" id="SSF58014">
    <property type="entry name" value="Coiled-coil domain of nucleotide exchange factor GrpE"/>
    <property type="match status" value="1"/>
</dbReference>
<dbReference type="SUPFAM" id="SSF51064">
    <property type="entry name" value="Head domain of nucleotide exchange factor GrpE"/>
    <property type="match status" value="1"/>
</dbReference>
<dbReference type="PROSITE" id="PS01071">
    <property type="entry name" value="GRPE"/>
    <property type="match status" value="1"/>
</dbReference>
<protein>
    <recommendedName>
        <fullName evidence="1">Protein GrpE</fullName>
    </recommendedName>
    <alternativeName>
        <fullName evidence="1">HSP-70 cofactor</fullName>
    </alternativeName>
</protein>
<organism>
    <name type="scientific">Wolbachia pipientis subsp. Culex pipiens (strain wPip)</name>
    <dbReference type="NCBI Taxonomy" id="570417"/>
    <lineage>
        <taxon>Bacteria</taxon>
        <taxon>Pseudomonadati</taxon>
        <taxon>Pseudomonadota</taxon>
        <taxon>Alphaproteobacteria</taxon>
        <taxon>Rickettsiales</taxon>
        <taxon>Anaplasmataceae</taxon>
        <taxon>Wolbachieae</taxon>
        <taxon>Wolbachia</taxon>
    </lineage>
</organism>
<accession>B3CPX8</accession>
<gene>
    <name evidence="1" type="primary">grpE</name>
    <name type="ordered locus">WP0523</name>
</gene>
<sequence>MSDSNKEKKKKFADMVSKRKGDDQEDQQTGDLSEELNILKERAVQLEDHLRRAVADNENVKRIMQKQISDASDYAVTKFARDMIDSCDNLKKAMENLKDGDPIHEGIKVAHQKIVSDLKKHGIEEIDPIGNSFDSNLHQAVVEREDNEKEPGTIVEVLQTGYTIKNRLLRPAMVILSKKSADCESN</sequence>
<name>GRPE_WOLPP</name>
<comment type="function">
    <text evidence="1">Participates actively in the response to hyperosmotic and heat shock by preventing the aggregation of stress-denatured proteins, in association with DnaK and GrpE. It is the nucleotide exchange factor for DnaK and may function as a thermosensor. Unfolded proteins bind initially to DnaJ; upon interaction with the DnaJ-bound protein, DnaK hydrolyzes its bound ATP, resulting in the formation of a stable complex. GrpE releases ADP from DnaK; ATP binding to DnaK triggers the release of the substrate protein, thus completing the reaction cycle. Several rounds of ATP-dependent interactions between DnaJ, DnaK and GrpE are required for fully efficient folding.</text>
</comment>
<comment type="subunit">
    <text evidence="1">Homodimer.</text>
</comment>
<comment type="subcellular location">
    <subcellularLocation>
        <location evidence="1">Cytoplasm</location>
    </subcellularLocation>
</comment>
<comment type="similarity">
    <text evidence="1">Belongs to the GrpE family.</text>
</comment>
<evidence type="ECO:0000255" key="1">
    <source>
        <dbReference type="HAMAP-Rule" id="MF_01151"/>
    </source>
</evidence>
<evidence type="ECO:0000256" key="2">
    <source>
        <dbReference type="SAM" id="MobiDB-lite"/>
    </source>
</evidence>
<keyword id="KW-0143">Chaperone</keyword>
<keyword id="KW-0963">Cytoplasm</keyword>
<keyword id="KW-0346">Stress response</keyword>
<feature type="chain" id="PRO_1000164230" description="Protein GrpE">
    <location>
        <begin position="1"/>
        <end position="186"/>
    </location>
</feature>
<feature type="region of interest" description="Disordered" evidence="2">
    <location>
        <begin position="1"/>
        <end position="35"/>
    </location>
</feature>
<feature type="compositionally biased region" description="Basic and acidic residues" evidence="2">
    <location>
        <begin position="1"/>
        <end position="22"/>
    </location>
</feature>
<feature type="compositionally biased region" description="Acidic residues" evidence="2">
    <location>
        <begin position="23"/>
        <end position="34"/>
    </location>
</feature>